<sequence length="269" mass="31076">MVIFTDLDGTLLNHEDYSFKDAIPSLERIKKKGIPLVIVTSKTKKEVELIQKELGIEEPFIVENGAAVFFPKGYRGFNIRCDQENRYCIIKLGRDYREIRDFIEKIKDKFKIKGFGDMTVEEIVRLTDLPYDRAELAKERDFTEPFIIEDEKDIKDLEEIAEKEGFKITKGGRFYHLIGKGQDKGRAVQIVKKVFEENYGEVPLTVGLGDSRNDIPMLREVDIPILIPHINKKYESVNLPGIIKAEYPGSKGWNESIWRILNEIERGCC</sequence>
<gene>
    <name evidence="3" type="primary">gpgP</name>
    <name type="ordered locus">PERMA_1578</name>
</gene>
<reference key="1">
    <citation type="journal article" date="2007" name="J. Bacteriol.">
        <title>Glucosylglycerate biosynthesis in the deepest lineage of the Bacteria: characterization of the thermophilic proteins GpgS and GpgP from Persephonella marina.</title>
        <authorList>
            <person name="Costa J."/>
            <person name="Empadinhas N."/>
            <person name="da Costa M.S."/>
        </authorList>
    </citation>
    <scope>NUCLEOTIDE SEQUENCE [GENOMIC DNA]</scope>
    <scope>FUNCTION</scope>
    <scope>CATALYTIC ACTIVITY</scope>
    <scope>BIOPHYSICOCHEMICAL PROPERTIES</scope>
    <scope>COFACTOR</scope>
    <scope>SUBUNIT</scope>
    <scope>SUBSTRATE SPECIFICITY</scope>
    <source>
        <strain>DSM 14350 / EX-H1</strain>
    </source>
</reference>
<reference key="2">
    <citation type="journal article" date="2009" name="J. Bacteriol.">
        <title>Complete and draft genome sequences of six members of the Aquificales.</title>
        <authorList>
            <person name="Reysenbach A.-L."/>
            <person name="Hamamura N."/>
            <person name="Podar M."/>
            <person name="Griffiths E."/>
            <person name="Ferreira S."/>
            <person name="Hochstein R."/>
            <person name="Heidelberg J."/>
            <person name="Johnson J."/>
            <person name="Mead D."/>
            <person name="Pohorille A."/>
            <person name="Sarmiento M."/>
            <person name="Schweighofer K."/>
            <person name="Seshadri R."/>
            <person name="Voytek M.A."/>
        </authorList>
    </citation>
    <scope>NUCLEOTIDE SEQUENCE [LARGE SCALE GENOMIC DNA]</scope>
    <source>
        <strain>DSM 14350 / EX-H1</strain>
    </source>
</reference>
<comment type="function">
    <text evidence="2">Involved in the biosynthesis of glucosylglycerate. Catalyzes the dephosphorylation of glucosyl-3-phosphoglycerate (GPG) and mannosyl-3-phosphoglycerate (MPG) to glucosylglycerate (GG) and mannosylglycerate (MG), respectively.</text>
</comment>
<comment type="catalytic activity">
    <reaction evidence="2">
        <text>(2R)-2-O-(alpha-D-glucopyranosyl)-3-phospho-glycerate + H2O = (2R)-2-O-(alpha-D-glucopyranosyl)-glycerate + phosphate</text>
        <dbReference type="Rhea" id="RHEA:31343"/>
        <dbReference type="ChEBI" id="CHEBI:15377"/>
        <dbReference type="ChEBI" id="CHEBI:43474"/>
        <dbReference type="ChEBI" id="CHEBI:62510"/>
        <dbReference type="ChEBI" id="CHEBI:62600"/>
        <dbReference type="EC" id="3.1.3.85"/>
    </reaction>
</comment>
<comment type="catalytic activity">
    <reaction evidence="2">
        <text>2-O-(alpha-D-mannosyl)-3-phosphoglycerate + H2O = (2R)-2-O-(alpha-D-mannosyl)-glycerate + phosphate</text>
        <dbReference type="Rhea" id="RHEA:19309"/>
        <dbReference type="ChEBI" id="CHEBI:15377"/>
        <dbReference type="ChEBI" id="CHEBI:43474"/>
        <dbReference type="ChEBI" id="CHEBI:57541"/>
        <dbReference type="ChEBI" id="CHEBI:57744"/>
        <dbReference type="EC" id="3.1.3.70"/>
    </reaction>
</comment>
<comment type="cofactor">
    <cofactor evidence="2">
        <name>Co(2+)</name>
        <dbReference type="ChEBI" id="CHEBI:48828"/>
    </cofactor>
    <cofactor evidence="2">
        <name>Mg(2+)</name>
        <dbReference type="ChEBI" id="CHEBI:18420"/>
    </cofactor>
    <text evidence="2">Divalent metal cations. Can use Mg(2+), Co(2+) and, to a lesser extent, Mn(2+) ions.</text>
</comment>
<comment type="biophysicochemical properties">
    <kinetics>
        <KM evidence="2">0.36 mM for GPG (at 70 degrees Celsius)</KM>
        <KM evidence="2">0.41 mM for GPG (at 85 degrees Celsius)</KM>
        <KM evidence="2">0.53 mM for GPG (at 90 degrees Celsius)</KM>
        <KM evidence="2">0.19 mM for MPG (at 85 degrees Celsius)</KM>
        <KM evidence="2">0.21 mM for MPG (at 90 degrees Celsius)</KM>
        <KM evidence="2">0.43 mM for MPG (at 70 degrees Celsius)</KM>
        <Vmax evidence="2">97.0 umol/min/mg enzyme with GPG as substrate (at 70 degrees Celsius)</Vmax>
        <Vmax evidence="2">288.0 umol/min/mg enzyme with GPG as substrate (at 90 degrees Celsius)</Vmax>
        <Vmax evidence="2">294.0 umol/min/mg enzyme with GPG as substrate (at 85 degrees Celsius)</Vmax>
        <Vmax evidence="2">17.9 umol/min/mg enzyme with MPG as substrate (at 90 degrees Celsius)</Vmax>
        <Vmax evidence="2">15.75 umol/min/mg enzyme with MPG as substrate (at 70 degrees Celsius)</Vmax>
        <Vmax evidence="2">19.6 umol/min/mg enzyme with MPG as substrate (at 85 degrees Celsius)</Vmax>
    </kinetics>
    <phDependence>
        <text evidence="2">Optimum pH is 7.</text>
    </phDependence>
    <temperatureDependence>
        <text evidence="2">Optimum temperature is 85 degrees Celsius.</text>
    </temperatureDependence>
</comment>
<comment type="subunit">
    <text evidence="2">Monomer.</text>
</comment>
<comment type="similarity">
    <text evidence="4">Belongs to the HAD-like hydrolase superfamily. MPGP family.</text>
</comment>
<keyword id="KW-0378">Hydrolase</keyword>
<keyword id="KW-0460">Magnesium</keyword>
<keyword id="KW-0479">Metal-binding</keyword>
<keyword id="KW-1185">Reference proteome</keyword>
<protein>
    <recommendedName>
        <fullName evidence="3">Glucosyl-3-phosphoglycerate/mannosyl-3-phosphoglycerate phosphatase</fullName>
        <shortName evidence="3">GpgP</shortName>
        <shortName evidence="3">MpgP</shortName>
        <ecNumber evidence="2">3.1.3.70</ecNumber>
        <ecNumber evidence="2">3.1.3.85</ecNumber>
    </recommendedName>
</protein>
<name>GPMPP_PERMH</name>
<proteinExistence type="evidence at protein level"/>
<dbReference type="EC" id="3.1.3.70" evidence="2"/>
<dbReference type="EC" id="3.1.3.85" evidence="2"/>
<dbReference type="EMBL" id="EU277657">
    <property type="protein sequence ID" value="ABX75858.1"/>
    <property type="molecule type" value="Genomic_DNA"/>
</dbReference>
<dbReference type="EMBL" id="CP001230">
    <property type="protein sequence ID" value="ACO04040.1"/>
    <property type="molecule type" value="Genomic_DNA"/>
</dbReference>
<dbReference type="SMR" id="C0QRP9"/>
<dbReference type="STRING" id="123214.PERMA_1578"/>
<dbReference type="PaxDb" id="123214-PERMA_1578"/>
<dbReference type="KEGG" id="pmx:PERMA_1578"/>
<dbReference type="eggNOG" id="COG3769">
    <property type="taxonomic scope" value="Bacteria"/>
</dbReference>
<dbReference type="HOGENOM" id="CLU_063016_0_0_0"/>
<dbReference type="OrthoDB" id="193379at2"/>
<dbReference type="BRENDA" id="3.1.3.85">
    <property type="organism ID" value="9181"/>
</dbReference>
<dbReference type="Proteomes" id="UP000001366">
    <property type="component" value="Chromosome"/>
</dbReference>
<dbReference type="GO" id="GO:0005829">
    <property type="term" value="C:cytosol"/>
    <property type="evidence" value="ECO:0007669"/>
    <property type="project" value="TreeGrafter"/>
</dbReference>
<dbReference type="GO" id="GO:0050897">
    <property type="term" value="F:cobalt ion binding"/>
    <property type="evidence" value="ECO:0000314"/>
    <property type="project" value="UniProtKB"/>
</dbReference>
<dbReference type="GO" id="GO:0000287">
    <property type="term" value="F:magnesium ion binding"/>
    <property type="evidence" value="ECO:0000314"/>
    <property type="project" value="UniProtKB"/>
</dbReference>
<dbReference type="GO" id="GO:0050531">
    <property type="term" value="F:mannosyl-3-phosphoglycerate phosphatase activity"/>
    <property type="evidence" value="ECO:0007669"/>
    <property type="project" value="UniProtKB-EC"/>
</dbReference>
<dbReference type="GO" id="GO:0016791">
    <property type="term" value="F:phosphatase activity"/>
    <property type="evidence" value="ECO:0000314"/>
    <property type="project" value="UniProtKB"/>
</dbReference>
<dbReference type="GO" id="GO:0051479">
    <property type="term" value="P:mannosylglycerate biosynthetic process"/>
    <property type="evidence" value="ECO:0007669"/>
    <property type="project" value="InterPro"/>
</dbReference>
<dbReference type="CDD" id="cd07507">
    <property type="entry name" value="HAD_Pase"/>
    <property type="match status" value="1"/>
</dbReference>
<dbReference type="Gene3D" id="3.40.50.1000">
    <property type="entry name" value="HAD superfamily/HAD-like"/>
    <property type="match status" value="1"/>
</dbReference>
<dbReference type="Gene3D" id="3.30.980.20">
    <property type="entry name" value="Putative mannosyl-3-phosphoglycerate phosphatase, domain 2"/>
    <property type="match status" value="1"/>
</dbReference>
<dbReference type="InterPro" id="IPR036412">
    <property type="entry name" value="HAD-like_sf"/>
</dbReference>
<dbReference type="InterPro" id="IPR006381">
    <property type="entry name" value="HAD-SF-IIB-MPGP"/>
</dbReference>
<dbReference type="InterPro" id="IPR006379">
    <property type="entry name" value="HAD-SF_hydro_IIB"/>
</dbReference>
<dbReference type="InterPro" id="IPR023214">
    <property type="entry name" value="HAD_sf"/>
</dbReference>
<dbReference type="NCBIfam" id="TIGR01484">
    <property type="entry name" value="HAD-SF-IIB"/>
    <property type="match status" value="1"/>
</dbReference>
<dbReference type="NCBIfam" id="TIGR01486">
    <property type="entry name" value="HAD-SF-IIB-MPGP"/>
    <property type="match status" value="1"/>
</dbReference>
<dbReference type="PANTHER" id="PTHR10000:SF8">
    <property type="entry name" value="HAD SUPERFAMILY HYDROLASE-LIKE, TYPE 3"/>
    <property type="match status" value="1"/>
</dbReference>
<dbReference type="PANTHER" id="PTHR10000">
    <property type="entry name" value="PHOSPHOSERINE PHOSPHATASE"/>
    <property type="match status" value="1"/>
</dbReference>
<dbReference type="Pfam" id="PF08282">
    <property type="entry name" value="Hydrolase_3"/>
    <property type="match status" value="1"/>
</dbReference>
<dbReference type="SFLD" id="SFLDG01142">
    <property type="entry name" value="C2.B.2:_Mannosyl-3-phosphoglyc"/>
    <property type="match status" value="1"/>
</dbReference>
<dbReference type="SFLD" id="SFLDS00003">
    <property type="entry name" value="Haloacid_Dehalogenase"/>
    <property type="match status" value="1"/>
</dbReference>
<dbReference type="SUPFAM" id="SSF56784">
    <property type="entry name" value="HAD-like"/>
    <property type="match status" value="1"/>
</dbReference>
<dbReference type="PROSITE" id="PS01228">
    <property type="entry name" value="COF_1"/>
    <property type="match status" value="1"/>
</dbReference>
<organism>
    <name type="scientific">Persephonella marina (strain DSM 14350 / EX-H1)</name>
    <dbReference type="NCBI Taxonomy" id="123214"/>
    <lineage>
        <taxon>Bacteria</taxon>
        <taxon>Pseudomonadati</taxon>
        <taxon>Aquificota</taxon>
        <taxon>Aquificia</taxon>
        <taxon>Aquificales</taxon>
        <taxon>Hydrogenothermaceae</taxon>
        <taxon>Persephonella</taxon>
    </lineage>
</organism>
<accession>C0QRP9</accession>
<accession>A9QXB5</accession>
<evidence type="ECO:0000250" key="1">
    <source>
        <dbReference type="UniProtKB" id="O58690"/>
    </source>
</evidence>
<evidence type="ECO:0000269" key="2">
    <source>
    </source>
</evidence>
<evidence type="ECO:0000303" key="3">
    <source>
    </source>
</evidence>
<evidence type="ECO:0000305" key="4"/>
<feature type="chain" id="PRO_0000420161" description="Glucosyl-3-phosphoglycerate/mannosyl-3-phosphoglycerate phosphatase">
    <location>
        <begin position="1"/>
        <end position="269"/>
    </location>
</feature>
<feature type="active site" description="Nucleophile" evidence="1">
    <location>
        <position position="6"/>
    </location>
</feature>
<feature type="binding site" evidence="1">
    <location>
        <position position="6"/>
    </location>
    <ligand>
        <name>Mg(2+)</name>
        <dbReference type="ChEBI" id="CHEBI:18420"/>
    </ligand>
</feature>
<feature type="binding site" evidence="1">
    <location>
        <position position="8"/>
    </location>
    <ligand>
        <name>Mg(2+)</name>
        <dbReference type="ChEBI" id="CHEBI:18420"/>
    </ligand>
</feature>
<feature type="binding site" evidence="1">
    <location>
        <position position="210"/>
    </location>
    <ligand>
        <name>Mg(2+)</name>
        <dbReference type="ChEBI" id="CHEBI:18420"/>
    </ligand>
</feature>
<feature type="sequence conflict" description="In Ref. 1; ABX75858." evidence="4" ref="1">
    <original>M</original>
    <variation>MANV</variation>
    <location>
        <position position="1"/>
    </location>
</feature>